<accession>A6QCF2</accession>
<evidence type="ECO:0000255" key="1">
    <source>
        <dbReference type="HAMAP-Rule" id="MF_01456"/>
    </source>
</evidence>
<keyword id="KW-0997">Cell inner membrane</keyword>
<keyword id="KW-1003">Cell membrane</keyword>
<keyword id="KW-0472">Membrane</keyword>
<keyword id="KW-0520">NAD</keyword>
<keyword id="KW-0874">Quinone</keyword>
<keyword id="KW-1278">Translocase</keyword>
<keyword id="KW-0812">Transmembrane</keyword>
<keyword id="KW-1133">Transmembrane helix</keyword>
<keyword id="KW-0813">Transport</keyword>
<keyword id="KW-0830">Ubiquinone</keyword>
<name>NUOK_SULNB</name>
<protein>
    <recommendedName>
        <fullName evidence="1">NADH-quinone oxidoreductase subunit K</fullName>
        <ecNumber evidence="1">7.1.1.-</ecNumber>
    </recommendedName>
    <alternativeName>
        <fullName evidence="1">NADH dehydrogenase I subunit K</fullName>
    </alternativeName>
    <alternativeName>
        <fullName evidence="1">NDH-1 subunit K</fullName>
    </alternativeName>
</protein>
<proteinExistence type="inferred from homology"/>
<feature type="chain" id="PRO_0000390257" description="NADH-quinone oxidoreductase subunit K">
    <location>
        <begin position="1"/>
        <end position="100"/>
    </location>
</feature>
<feature type="transmembrane region" description="Helical" evidence="1">
    <location>
        <begin position="2"/>
        <end position="22"/>
    </location>
</feature>
<feature type="transmembrane region" description="Helical" evidence="1">
    <location>
        <begin position="29"/>
        <end position="49"/>
    </location>
</feature>
<feature type="transmembrane region" description="Helical" evidence="1">
    <location>
        <begin position="63"/>
        <end position="83"/>
    </location>
</feature>
<dbReference type="EC" id="7.1.1.-" evidence="1"/>
<dbReference type="EMBL" id="AP009179">
    <property type="protein sequence ID" value="BAF73161.1"/>
    <property type="molecule type" value="Genomic_DNA"/>
</dbReference>
<dbReference type="RefSeq" id="WP_012083995.1">
    <property type="nucleotide sequence ID" value="NC_009663.1"/>
</dbReference>
<dbReference type="SMR" id="A6QCF2"/>
<dbReference type="STRING" id="387093.SUN_2221"/>
<dbReference type="KEGG" id="sun:SUN_2221"/>
<dbReference type="eggNOG" id="COG0713">
    <property type="taxonomic scope" value="Bacteria"/>
</dbReference>
<dbReference type="HOGENOM" id="CLU_144724_0_0_7"/>
<dbReference type="OrthoDB" id="9810120at2"/>
<dbReference type="Proteomes" id="UP000006378">
    <property type="component" value="Chromosome"/>
</dbReference>
<dbReference type="GO" id="GO:0030964">
    <property type="term" value="C:NADH dehydrogenase complex"/>
    <property type="evidence" value="ECO:0007669"/>
    <property type="project" value="TreeGrafter"/>
</dbReference>
<dbReference type="GO" id="GO:0005886">
    <property type="term" value="C:plasma membrane"/>
    <property type="evidence" value="ECO:0007669"/>
    <property type="project" value="UniProtKB-SubCell"/>
</dbReference>
<dbReference type="GO" id="GO:0050136">
    <property type="term" value="F:NADH:ubiquinone reductase (non-electrogenic) activity"/>
    <property type="evidence" value="ECO:0007669"/>
    <property type="project" value="UniProtKB-UniRule"/>
</dbReference>
<dbReference type="GO" id="GO:0048038">
    <property type="term" value="F:quinone binding"/>
    <property type="evidence" value="ECO:0007669"/>
    <property type="project" value="UniProtKB-KW"/>
</dbReference>
<dbReference type="GO" id="GO:0042773">
    <property type="term" value="P:ATP synthesis coupled electron transport"/>
    <property type="evidence" value="ECO:0007669"/>
    <property type="project" value="InterPro"/>
</dbReference>
<dbReference type="FunFam" id="1.10.287.3510:FF:000001">
    <property type="entry name" value="NADH-quinone oxidoreductase subunit K"/>
    <property type="match status" value="1"/>
</dbReference>
<dbReference type="Gene3D" id="1.10.287.3510">
    <property type="match status" value="1"/>
</dbReference>
<dbReference type="HAMAP" id="MF_01456">
    <property type="entry name" value="NDH1_NuoK"/>
    <property type="match status" value="1"/>
</dbReference>
<dbReference type="InterPro" id="IPR001133">
    <property type="entry name" value="NADH_UbQ_OxRdtase_chain4L/K"/>
</dbReference>
<dbReference type="InterPro" id="IPR039428">
    <property type="entry name" value="NUOK/Mnh_C1-like"/>
</dbReference>
<dbReference type="NCBIfam" id="NF004320">
    <property type="entry name" value="PRK05715.1-2"/>
    <property type="match status" value="1"/>
</dbReference>
<dbReference type="NCBIfam" id="NF004321">
    <property type="entry name" value="PRK05715.1-3"/>
    <property type="match status" value="1"/>
</dbReference>
<dbReference type="NCBIfam" id="NF004323">
    <property type="entry name" value="PRK05715.1-5"/>
    <property type="match status" value="1"/>
</dbReference>
<dbReference type="PANTHER" id="PTHR11434:SF21">
    <property type="entry name" value="NADH DEHYDROGENASE SUBUNIT 4L-RELATED"/>
    <property type="match status" value="1"/>
</dbReference>
<dbReference type="PANTHER" id="PTHR11434">
    <property type="entry name" value="NADH-UBIQUINONE OXIDOREDUCTASE SUBUNIT ND4L"/>
    <property type="match status" value="1"/>
</dbReference>
<dbReference type="Pfam" id="PF00420">
    <property type="entry name" value="Oxidored_q2"/>
    <property type="match status" value="1"/>
</dbReference>
<sequence length="100" mass="10980">MIGLSHYLIVSALIFSIGLMGVLRRRNLLMLFFATEVMLNAVNIAFAAISHYYNDLTGQMFAFFIIAIAASEVAVGLGILIVLYKRYGSLDLDDLASMKG</sequence>
<organism>
    <name type="scientific">Sulfurovum sp. (strain NBC37-1)</name>
    <dbReference type="NCBI Taxonomy" id="387093"/>
    <lineage>
        <taxon>Bacteria</taxon>
        <taxon>Pseudomonadati</taxon>
        <taxon>Campylobacterota</taxon>
        <taxon>Epsilonproteobacteria</taxon>
        <taxon>Campylobacterales</taxon>
        <taxon>Sulfurovaceae</taxon>
        <taxon>Sulfurovum</taxon>
    </lineage>
</organism>
<gene>
    <name evidence="1" type="primary">nuoK</name>
    <name type="ordered locus">SUN_2221</name>
</gene>
<reference key="1">
    <citation type="journal article" date="2007" name="Proc. Natl. Acad. Sci. U.S.A.">
        <title>Deep-sea vent epsilon-proteobacterial genomes provide insights into emergence of pathogens.</title>
        <authorList>
            <person name="Nakagawa S."/>
            <person name="Takaki Y."/>
            <person name="Shimamura S."/>
            <person name="Reysenbach A.-L."/>
            <person name="Takai K."/>
            <person name="Horikoshi K."/>
        </authorList>
    </citation>
    <scope>NUCLEOTIDE SEQUENCE [LARGE SCALE GENOMIC DNA]</scope>
    <source>
        <strain>NBC37-1</strain>
    </source>
</reference>
<comment type="function">
    <text evidence="1">NDH-1 shuttles electrons from NADH, via FMN and iron-sulfur (Fe-S) centers, to quinones in the respiratory chain. The immediate electron acceptor for the enzyme in this species is believed to be ubiquinone. Couples the redox reaction to proton translocation (for every two electrons transferred, four hydrogen ions are translocated across the cytoplasmic membrane), and thus conserves the redox energy in a proton gradient.</text>
</comment>
<comment type="catalytic activity">
    <reaction evidence="1">
        <text>a quinone + NADH + 5 H(+)(in) = a quinol + NAD(+) + 4 H(+)(out)</text>
        <dbReference type="Rhea" id="RHEA:57888"/>
        <dbReference type="ChEBI" id="CHEBI:15378"/>
        <dbReference type="ChEBI" id="CHEBI:24646"/>
        <dbReference type="ChEBI" id="CHEBI:57540"/>
        <dbReference type="ChEBI" id="CHEBI:57945"/>
        <dbReference type="ChEBI" id="CHEBI:132124"/>
    </reaction>
</comment>
<comment type="subunit">
    <text evidence="1">NDH-1 is composed of 14 different subunits. Subunits NuoA, H, J, K, L, M, N constitute the membrane sector of the complex.</text>
</comment>
<comment type="subcellular location">
    <subcellularLocation>
        <location evidence="1">Cell inner membrane</location>
        <topology evidence="1">Multi-pass membrane protein</topology>
    </subcellularLocation>
</comment>
<comment type="similarity">
    <text evidence="1">Belongs to the complex I subunit 4L family.</text>
</comment>